<sequence>MKLDVIKLDGTKAGNIDLDEALFGLEPRADILHRVVRWQRNNAQAGTHKVLTKSEVSYSTKKIYRQKGTGGARHGSRKSPTFRHGGVYKGPTPRSHGHDLTKKFRKLGLRHALSAKAKAGELVVIENAEAEGKTAALAKQVANLGWKRALVIDGAAVNEGFARAARNIEGLDILPSMGANVYDILKRDTLVLTKAAVEALEARLK</sequence>
<comment type="function">
    <text evidence="1">One of the primary rRNA binding proteins, this protein initially binds near the 5'-end of the 23S rRNA. It is important during the early stages of 50S assembly. It makes multiple contacts with different domains of the 23S rRNA in the assembled 50S subunit and ribosome.</text>
</comment>
<comment type="function">
    <text evidence="1">Forms part of the polypeptide exit tunnel.</text>
</comment>
<comment type="subunit">
    <text evidence="1">Part of the 50S ribosomal subunit.</text>
</comment>
<comment type="similarity">
    <text evidence="1">Belongs to the universal ribosomal protein uL4 family.</text>
</comment>
<evidence type="ECO:0000255" key="1">
    <source>
        <dbReference type="HAMAP-Rule" id="MF_01328"/>
    </source>
</evidence>
<evidence type="ECO:0000256" key="2">
    <source>
        <dbReference type="SAM" id="MobiDB-lite"/>
    </source>
</evidence>
<evidence type="ECO:0000305" key="3"/>
<dbReference type="EMBL" id="CP000031">
    <property type="protein sequence ID" value="AAV97038.1"/>
    <property type="molecule type" value="Genomic_DNA"/>
</dbReference>
<dbReference type="RefSeq" id="WP_011049496.1">
    <property type="nucleotide sequence ID" value="NC_003911.12"/>
</dbReference>
<dbReference type="SMR" id="Q5LLU7"/>
<dbReference type="STRING" id="246200.SPO3824"/>
<dbReference type="PaxDb" id="246200-SPO3824"/>
<dbReference type="KEGG" id="sil:SPO3824"/>
<dbReference type="eggNOG" id="COG0088">
    <property type="taxonomic scope" value="Bacteria"/>
</dbReference>
<dbReference type="HOGENOM" id="CLU_041575_5_1_5"/>
<dbReference type="OrthoDB" id="9803201at2"/>
<dbReference type="Proteomes" id="UP000001023">
    <property type="component" value="Chromosome"/>
</dbReference>
<dbReference type="GO" id="GO:1990904">
    <property type="term" value="C:ribonucleoprotein complex"/>
    <property type="evidence" value="ECO:0007669"/>
    <property type="project" value="UniProtKB-KW"/>
</dbReference>
<dbReference type="GO" id="GO:0005840">
    <property type="term" value="C:ribosome"/>
    <property type="evidence" value="ECO:0007669"/>
    <property type="project" value="UniProtKB-KW"/>
</dbReference>
<dbReference type="GO" id="GO:0019843">
    <property type="term" value="F:rRNA binding"/>
    <property type="evidence" value="ECO:0007669"/>
    <property type="project" value="UniProtKB-UniRule"/>
</dbReference>
<dbReference type="GO" id="GO:0003735">
    <property type="term" value="F:structural constituent of ribosome"/>
    <property type="evidence" value="ECO:0007669"/>
    <property type="project" value="InterPro"/>
</dbReference>
<dbReference type="GO" id="GO:0006412">
    <property type="term" value="P:translation"/>
    <property type="evidence" value="ECO:0007669"/>
    <property type="project" value="UniProtKB-UniRule"/>
</dbReference>
<dbReference type="Gene3D" id="3.40.1370.10">
    <property type="match status" value="1"/>
</dbReference>
<dbReference type="HAMAP" id="MF_01328_B">
    <property type="entry name" value="Ribosomal_uL4_B"/>
    <property type="match status" value="1"/>
</dbReference>
<dbReference type="InterPro" id="IPR002136">
    <property type="entry name" value="Ribosomal_uL4"/>
</dbReference>
<dbReference type="InterPro" id="IPR013005">
    <property type="entry name" value="Ribosomal_uL4-like"/>
</dbReference>
<dbReference type="InterPro" id="IPR023574">
    <property type="entry name" value="Ribosomal_uL4_dom_sf"/>
</dbReference>
<dbReference type="NCBIfam" id="TIGR03953">
    <property type="entry name" value="rplD_bact"/>
    <property type="match status" value="1"/>
</dbReference>
<dbReference type="PANTHER" id="PTHR10746">
    <property type="entry name" value="50S RIBOSOMAL PROTEIN L4"/>
    <property type="match status" value="1"/>
</dbReference>
<dbReference type="PANTHER" id="PTHR10746:SF6">
    <property type="entry name" value="LARGE RIBOSOMAL SUBUNIT PROTEIN UL4M"/>
    <property type="match status" value="1"/>
</dbReference>
<dbReference type="Pfam" id="PF00573">
    <property type="entry name" value="Ribosomal_L4"/>
    <property type="match status" value="1"/>
</dbReference>
<dbReference type="SUPFAM" id="SSF52166">
    <property type="entry name" value="Ribosomal protein L4"/>
    <property type="match status" value="1"/>
</dbReference>
<name>RL4_RUEPO</name>
<organism>
    <name type="scientific">Ruegeria pomeroyi (strain ATCC 700808 / DSM 15171 / DSS-3)</name>
    <name type="common">Silicibacter pomeroyi</name>
    <dbReference type="NCBI Taxonomy" id="246200"/>
    <lineage>
        <taxon>Bacteria</taxon>
        <taxon>Pseudomonadati</taxon>
        <taxon>Pseudomonadota</taxon>
        <taxon>Alphaproteobacteria</taxon>
        <taxon>Rhodobacterales</taxon>
        <taxon>Roseobacteraceae</taxon>
        <taxon>Ruegeria</taxon>
    </lineage>
</organism>
<gene>
    <name evidence="1" type="primary">rplD</name>
    <name type="ordered locus">SPO3824</name>
</gene>
<accession>Q5LLU7</accession>
<reference key="1">
    <citation type="journal article" date="2004" name="Nature">
        <title>Genome sequence of Silicibacter pomeroyi reveals adaptations to the marine environment.</title>
        <authorList>
            <person name="Moran M.A."/>
            <person name="Buchan A."/>
            <person name="Gonzalez J.M."/>
            <person name="Heidelberg J.F."/>
            <person name="Whitman W.B."/>
            <person name="Kiene R.P."/>
            <person name="Henriksen J.R."/>
            <person name="King G.M."/>
            <person name="Belas R."/>
            <person name="Fuqua C."/>
            <person name="Brinkac L.M."/>
            <person name="Lewis M."/>
            <person name="Johri S."/>
            <person name="Weaver B."/>
            <person name="Pai G."/>
            <person name="Eisen J.A."/>
            <person name="Rahe E."/>
            <person name="Sheldon W.M."/>
            <person name="Ye W."/>
            <person name="Miller T.R."/>
            <person name="Carlton J."/>
            <person name="Rasko D.A."/>
            <person name="Paulsen I.T."/>
            <person name="Ren Q."/>
            <person name="Daugherty S.C."/>
            <person name="DeBoy R.T."/>
            <person name="Dodson R.J."/>
            <person name="Durkin A.S."/>
            <person name="Madupu R."/>
            <person name="Nelson W.C."/>
            <person name="Sullivan S.A."/>
            <person name="Rosovitz M.J."/>
            <person name="Haft D.H."/>
            <person name="Selengut J."/>
            <person name="Ward N."/>
        </authorList>
    </citation>
    <scope>NUCLEOTIDE SEQUENCE [LARGE SCALE GENOMIC DNA]</scope>
    <source>
        <strain>ATCC 700808 / DSM 15171 / DSS-3</strain>
    </source>
</reference>
<reference key="2">
    <citation type="journal article" date="2014" name="Stand. Genomic Sci.">
        <title>An updated genome annotation for the model marine bacterium Ruegeria pomeroyi DSS-3.</title>
        <authorList>
            <person name="Rivers A.R."/>
            <person name="Smith C.B."/>
            <person name="Moran M.A."/>
        </authorList>
    </citation>
    <scope>GENOME REANNOTATION</scope>
    <source>
        <strain>ATCC 700808 / DSM 15171 / DSS-3</strain>
    </source>
</reference>
<feature type="chain" id="PRO_0000242439" description="Large ribosomal subunit protein uL4">
    <location>
        <begin position="1"/>
        <end position="205"/>
    </location>
</feature>
<feature type="region of interest" description="Disordered" evidence="2">
    <location>
        <begin position="65"/>
        <end position="99"/>
    </location>
</feature>
<protein>
    <recommendedName>
        <fullName evidence="1">Large ribosomal subunit protein uL4</fullName>
    </recommendedName>
    <alternativeName>
        <fullName evidence="3">50S ribosomal protein L4</fullName>
    </alternativeName>
</protein>
<proteinExistence type="inferred from homology"/>
<keyword id="KW-1185">Reference proteome</keyword>
<keyword id="KW-0687">Ribonucleoprotein</keyword>
<keyword id="KW-0689">Ribosomal protein</keyword>
<keyword id="KW-0694">RNA-binding</keyword>
<keyword id="KW-0699">rRNA-binding</keyword>